<sequence length="60" mass="6960">MNRFRVATDQLDLYKASLMNRAFSSNQNSRNNGKYFLQQLTQFQSTEIKGEGSVIRNLDN</sequence>
<organism>
    <name type="scientific">Dictyostelium discoideum</name>
    <name type="common">Social amoeba</name>
    <dbReference type="NCBI Taxonomy" id="44689"/>
    <lineage>
        <taxon>Eukaryota</taxon>
        <taxon>Amoebozoa</taxon>
        <taxon>Evosea</taxon>
        <taxon>Eumycetozoa</taxon>
        <taxon>Dictyostelia</taxon>
        <taxon>Dictyosteliales</taxon>
        <taxon>Dictyosteliaceae</taxon>
        <taxon>Dictyostelium</taxon>
    </lineage>
</organism>
<gene>
    <name type="ORF">DDB_G0280597</name>
</gene>
<proteinExistence type="predicted"/>
<protein>
    <recommendedName>
        <fullName>Putative uncharacterized protein DDB_G0280597</fullName>
    </recommendedName>
</protein>
<dbReference type="EMBL" id="AAFI02000037">
    <property type="protein sequence ID" value="EAL67100.1"/>
    <property type="molecule type" value="Genomic_DNA"/>
</dbReference>
<dbReference type="RefSeq" id="XP_641071.1">
    <property type="nucleotide sequence ID" value="XM_635979.1"/>
</dbReference>
<dbReference type="PaxDb" id="44689-DDB0206065"/>
<dbReference type="EnsemblProtists" id="EAL67100">
    <property type="protein sequence ID" value="EAL67100"/>
    <property type="gene ID" value="DDB_G0280597"/>
</dbReference>
<dbReference type="GeneID" id="8622629"/>
<dbReference type="KEGG" id="ddi:DDB_G0280597"/>
<dbReference type="dictyBase" id="DDB_G0280597"/>
<dbReference type="VEuPathDB" id="AmoebaDB:DDB_G0280597"/>
<dbReference type="HOGENOM" id="CLU_2946468_0_0_1"/>
<dbReference type="InParanoid" id="Q54V60"/>
<dbReference type="PRO" id="PR:Q54V60"/>
<dbReference type="Proteomes" id="UP000002195">
    <property type="component" value="Chromosome 3"/>
</dbReference>
<accession>Q54V60</accession>
<reference key="1">
    <citation type="journal article" date="2005" name="Nature">
        <title>The genome of the social amoeba Dictyostelium discoideum.</title>
        <authorList>
            <person name="Eichinger L."/>
            <person name="Pachebat J.A."/>
            <person name="Gloeckner G."/>
            <person name="Rajandream M.A."/>
            <person name="Sucgang R."/>
            <person name="Berriman M."/>
            <person name="Song J."/>
            <person name="Olsen R."/>
            <person name="Szafranski K."/>
            <person name="Xu Q."/>
            <person name="Tunggal B."/>
            <person name="Kummerfeld S."/>
            <person name="Madera M."/>
            <person name="Konfortov B.A."/>
            <person name="Rivero F."/>
            <person name="Bankier A.T."/>
            <person name="Lehmann R."/>
            <person name="Hamlin N."/>
            <person name="Davies R."/>
            <person name="Gaudet P."/>
            <person name="Fey P."/>
            <person name="Pilcher K."/>
            <person name="Chen G."/>
            <person name="Saunders D."/>
            <person name="Sodergren E.J."/>
            <person name="Davis P."/>
            <person name="Kerhornou A."/>
            <person name="Nie X."/>
            <person name="Hall N."/>
            <person name="Anjard C."/>
            <person name="Hemphill L."/>
            <person name="Bason N."/>
            <person name="Farbrother P."/>
            <person name="Desany B."/>
            <person name="Just E."/>
            <person name="Morio T."/>
            <person name="Rost R."/>
            <person name="Churcher C.M."/>
            <person name="Cooper J."/>
            <person name="Haydock S."/>
            <person name="van Driessche N."/>
            <person name="Cronin A."/>
            <person name="Goodhead I."/>
            <person name="Muzny D.M."/>
            <person name="Mourier T."/>
            <person name="Pain A."/>
            <person name="Lu M."/>
            <person name="Harper D."/>
            <person name="Lindsay R."/>
            <person name="Hauser H."/>
            <person name="James K.D."/>
            <person name="Quiles M."/>
            <person name="Madan Babu M."/>
            <person name="Saito T."/>
            <person name="Buchrieser C."/>
            <person name="Wardroper A."/>
            <person name="Felder M."/>
            <person name="Thangavelu M."/>
            <person name="Johnson D."/>
            <person name="Knights A."/>
            <person name="Loulseged H."/>
            <person name="Mungall K.L."/>
            <person name="Oliver K."/>
            <person name="Price C."/>
            <person name="Quail M.A."/>
            <person name="Urushihara H."/>
            <person name="Hernandez J."/>
            <person name="Rabbinowitsch E."/>
            <person name="Steffen D."/>
            <person name="Sanders M."/>
            <person name="Ma J."/>
            <person name="Kohara Y."/>
            <person name="Sharp S."/>
            <person name="Simmonds M.N."/>
            <person name="Spiegler S."/>
            <person name="Tivey A."/>
            <person name="Sugano S."/>
            <person name="White B."/>
            <person name="Walker D."/>
            <person name="Woodward J.R."/>
            <person name="Winckler T."/>
            <person name="Tanaka Y."/>
            <person name="Shaulsky G."/>
            <person name="Schleicher M."/>
            <person name="Weinstock G.M."/>
            <person name="Rosenthal A."/>
            <person name="Cox E.C."/>
            <person name="Chisholm R.L."/>
            <person name="Gibbs R.A."/>
            <person name="Loomis W.F."/>
            <person name="Platzer M."/>
            <person name="Kay R.R."/>
            <person name="Williams J.G."/>
            <person name="Dear P.H."/>
            <person name="Noegel A.A."/>
            <person name="Barrell B.G."/>
            <person name="Kuspa A."/>
        </authorList>
    </citation>
    <scope>NUCLEOTIDE SEQUENCE [LARGE SCALE GENOMIC DNA]</scope>
    <source>
        <strain>AX4</strain>
    </source>
</reference>
<feature type="chain" id="PRO_0000352445" description="Putative uncharacterized protein DDB_G0280597">
    <location>
        <begin position="1"/>
        <end position="60"/>
    </location>
</feature>
<keyword id="KW-1185">Reference proteome</keyword>
<name>Y6065_DICDI</name>